<sequence length="498" mass="55684">MHPDLTERILQHLETTDKADTLDLAALFAEDHQKIVGSLKSIQAHGELVTAETVTHKSLGLTDEGRAVVENGSHEALVYDLVPPEGIAQAALMAAGGANAKVGFSKAMSHGWILVDKSVTPPLVRRKVDTITDVVRNQLQQVALGKGDQLPAKEVADFKKRKLLQETTTKSFVLARGPEFATTLTKLETDLTVEMLANGLWDQLKFKAYNFDALGAPPTRGHLHPLLKVRTEFRQIFLEMGFSEMPTNNYVESSFWNFDALYQPQQHPARDAHDTFFVNHPAKSHKFPQDYLERVKKVHSVGGYGSKGYGYDWKLEEAQKNLLRTHTTAVSARMLYKLANQEGGFKAAKYFSIDKVFRNETLDATHLAEFHQVEGVIADVGLTLGDLIGTLYEFFRKLGITQLEFKPAYNPYTEPSMEIFCYHPGLAKWIEVGNSGVFRPEMLLPMGLPENVNVIAWGLSLERPTMIKYGINNIRDLVGPKVDLKMVEEGPICRLDHA</sequence>
<name>SYFA_DROME</name>
<gene>
    <name evidence="6" type="primary">alpha-PheRS</name>
    <name evidence="6" type="ORF">CG2263</name>
</gene>
<dbReference type="EC" id="6.1.1.20" evidence="4"/>
<dbReference type="EMBL" id="AE014298">
    <property type="protein sequence ID" value="AAF46332.1"/>
    <property type="molecule type" value="Genomic_DNA"/>
</dbReference>
<dbReference type="EMBL" id="AY051694">
    <property type="protein sequence ID" value="AAK93118.1"/>
    <property type="molecule type" value="mRNA"/>
</dbReference>
<dbReference type="RefSeq" id="NP_572448.1">
    <property type="nucleotide sequence ID" value="NM_132220.4"/>
</dbReference>
<dbReference type="SMR" id="Q9W3J5"/>
<dbReference type="BioGRID" id="58208">
    <property type="interactions" value="3"/>
</dbReference>
<dbReference type="FunCoup" id="Q9W3J5">
    <property type="interactions" value="2118"/>
</dbReference>
<dbReference type="IntAct" id="Q9W3J5">
    <property type="interactions" value="2"/>
</dbReference>
<dbReference type="STRING" id="7227.FBpp0071138"/>
<dbReference type="PaxDb" id="7227-FBpp0071138"/>
<dbReference type="DNASU" id="31740"/>
<dbReference type="EnsemblMetazoa" id="FBtr0071190">
    <property type="protein sequence ID" value="FBpp0071138"/>
    <property type="gene ID" value="FBgn0030007"/>
</dbReference>
<dbReference type="GeneID" id="31740"/>
<dbReference type="KEGG" id="dme:Dmel_CG2263"/>
<dbReference type="UCSC" id="CG2263-RA">
    <property type="organism name" value="d. melanogaster"/>
</dbReference>
<dbReference type="AGR" id="FB:FBgn0030007"/>
<dbReference type="CTD" id="31740"/>
<dbReference type="FlyBase" id="FBgn0030007">
    <property type="gene designation" value="alpha-PheRS"/>
</dbReference>
<dbReference type="VEuPathDB" id="VectorBase:FBgn0030007"/>
<dbReference type="eggNOG" id="KOG2784">
    <property type="taxonomic scope" value="Eukaryota"/>
</dbReference>
<dbReference type="GeneTree" id="ENSGT00390000006387"/>
<dbReference type="HOGENOM" id="CLU_025086_2_2_1"/>
<dbReference type="InParanoid" id="Q9W3J5"/>
<dbReference type="OMA" id="QIEGWVM"/>
<dbReference type="OrthoDB" id="238316at2759"/>
<dbReference type="PhylomeDB" id="Q9W3J5"/>
<dbReference type="BioGRID-ORCS" id="31740">
    <property type="hits" value="0 hits in 3 CRISPR screens"/>
</dbReference>
<dbReference type="GenomeRNAi" id="31740"/>
<dbReference type="PRO" id="PR:Q9W3J5"/>
<dbReference type="Proteomes" id="UP000000803">
    <property type="component" value="Chromosome X"/>
</dbReference>
<dbReference type="Bgee" id="FBgn0030007">
    <property type="expression patterns" value="Expressed in adult enteroendocrine precursor cell in adult midgut (Drosophila) and 106 other cell types or tissues"/>
</dbReference>
<dbReference type="GO" id="GO:0005737">
    <property type="term" value="C:cytoplasm"/>
    <property type="evidence" value="ECO:0000318"/>
    <property type="project" value="GO_Central"/>
</dbReference>
<dbReference type="GO" id="GO:0009328">
    <property type="term" value="C:phenylalanine-tRNA ligase complex"/>
    <property type="evidence" value="ECO:0000318"/>
    <property type="project" value="GO_Central"/>
</dbReference>
<dbReference type="GO" id="GO:0005524">
    <property type="term" value="F:ATP binding"/>
    <property type="evidence" value="ECO:0007669"/>
    <property type="project" value="UniProtKB-KW"/>
</dbReference>
<dbReference type="GO" id="GO:0000287">
    <property type="term" value="F:magnesium ion binding"/>
    <property type="evidence" value="ECO:0000250"/>
    <property type="project" value="UniProtKB"/>
</dbReference>
<dbReference type="GO" id="GO:0004826">
    <property type="term" value="F:phenylalanine-tRNA ligase activity"/>
    <property type="evidence" value="ECO:0000314"/>
    <property type="project" value="FlyBase"/>
</dbReference>
<dbReference type="GO" id="GO:0000049">
    <property type="term" value="F:tRNA binding"/>
    <property type="evidence" value="ECO:0007669"/>
    <property type="project" value="InterPro"/>
</dbReference>
<dbReference type="GO" id="GO:0006432">
    <property type="term" value="P:phenylalanyl-tRNA aminoacylation"/>
    <property type="evidence" value="ECO:0000314"/>
    <property type="project" value="FlyBase"/>
</dbReference>
<dbReference type="CDD" id="cd00496">
    <property type="entry name" value="PheRS_alpha_core"/>
    <property type="match status" value="1"/>
</dbReference>
<dbReference type="FunFam" id="3.30.930.10:FF:000033">
    <property type="entry name" value="Phenylalanine--tRNA ligase alpha subunit"/>
    <property type="match status" value="1"/>
</dbReference>
<dbReference type="FunFam" id="1.10.10.2320:FF:000001">
    <property type="entry name" value="phenylalanine--tRNA ligase alpha subunit"/>
    <property type="match status" value="1"/>
</dbReference>
<dbReference type="FunFam" id="1.10.10.2330:FF:000005">
    <property type="entry name" value="phenylalanine--tRNA ligase alpha subunit"/>
    <property type="match status" value="1"/>
</dbReference>
<dbReference type="Gene3D" id="1.10.10.2320">
    <property type="match status" value="1"/>
</dbReference>
<dbReference type="Gene3D" id="1.10.10.2330">
    <property type="match status" value="1"/>
</dbReference>
<dbReference type="Gene3D" id="3.30.1370.240">
    <property type="match status" value="1"/>
</dbReference>
<dbReference type="Gene3D" id="3.30.930.10">
    <property type="entry name" value="Bira Bifunctional Protein, Domain 2"/>
    <property type="match status" value="1"/>
</dbReference>
<dbReference type="InterPro" id="IPR006195">
    <property type="entry name" value="aa-tRNA-synth_II"/>
</dbReference>
<dbReference type="InterPro" id="IPR045864">
    <property type="entry name" value="aa-tRNA-synth_II/BPL/LPL"/>
</dbReference>
<dbReference type="InterPro" id="IPR004529">
    <property type="entry name" value="Phe-tRNA-synth_IIc_asu"/>
</dbReference>
<dbReference type="InterPro" id="IPR002319">
    <property type="entry name" value="Phenylalanyl-tRNA_Synthase"/>
</dbReference>
<dbReference type="InterPro" id="IPR040724">
    <property type="entry name" value="PheRS_DBD1"/>
</dbReference>
<dbReference type="InterPro" id="IPR040586">
    <property type="entry name" value="PheRS_DBD2"/>
</dbReference>
<dbReference type="InterPro" id="IPR040725">
    <property type="entry name" value="PheRS_DBD3"/>
</dbReference>
<dbReference type="NCBIfam" id="TIGR00468">
    <property type="entry name" value="pheS"/>
    <property type="match status" value="1"/>
</dbReference>
<dbReference type="NCBIfam" id="NF003210">
    <property type="entry name" value="PRK04172.1"/>
    <property type="match status" value="1"/>
</dbReference>
<dbReference type="PANTHER" id="PTHR11538:SF40">
    <property type="entry name" value="PHENYLALANINE--TRNA LIGASE ALPHA SUBUNIT"/>
    <property type="match status" value="1"/>
</dbReference>
<dbReference type="PANTHER" id="PTHR11538">
    <property type="entry name" value="PHENYLALANYL-TRNA SYNTHETASE"/>
    <property type="match status" value="1"/>
</dbReference>
<dbReference type="Pfam" id="PF18552">
    <property type="entry name" value="PheRS_DBD1"/>
    <property type="match status" value="1"/>
</dbReference>
<dbReference type="Pfam" id="PF18554">
    <property type="entry name" value="PheRS_DBD2"/>
    <property type="match status" value="1"/>
</dbReference>
<dbReference type="Pfam" id="PF18553">
    <property type="entry name" value="PheRS_DBD3"/>
    <property type="match status" value="1"/>
</dbReference>
<dbReference type="Pfam" id="PF01409">
    <property type="entry name" value="tRNA-synt_2d"/>
    <property type="match status" value="1"/>
</dbReference>
<dbReference type="SUPFAM" id="SSF55681">
    <property type="entry name" value="Class II aaRS and biotin synthetases"/>
    <property type="match status" value="1"/>
</dbReference>
<dbReference type="PROSITE" id="PS50862">
    <property type="entry name" value="AA_TRNA_LIGASE_II"/>
    <property type="match status" value="1"/>
</dbReference>
<accession>Q9W3J5</accession>
<proteinExistence type="evidence at protein level"/>
<feature type="chain" id="PRO_0000126825" description="Phenylalanine--tRNA ligase alpha subunit">
    <location>
        <begin position="1"/>
        <end position="498"/>
    </location>
</feature>
<feature type="binding site" evidence="3">
    <location>
        <position position="328"/>
    </location>
    <ligand>
        <name>L-phenylalanine</name>
        <dbReference type="ChEBI" id="CHEBI:58095"/>
    </ligand>
</feature>
<feature type="binding site" evidence="3">
    <location>
        <begin position="372"/>
        <end position="374"/>
    </location>
    <ligand>
        <name>L-phenylalanine</name>
        <dbReference type="ChEBI" id="CHEBI:58095"/>
    </ligand>
</feature>
<feature type="binding site" evidence="3">
    <location>
        <position position="412"/>
    </location>
    <ligand>
        <name>L-phenylalanine</name>
        <dbReference type="ChEBI" id="CHEBI:58095"/>
    </ligand>
</feature>
<feature type="binding site" evidence="2">
    <location>
        <position position="414"/>
    </location>
    <ligand>
        <name>Mg(2+)</name>
        <dbReference type="ChEBI" id="CHEBI:18420"/>
        <note>shared with beta subunit</note>
    </ligand>
</feature>
<feature type="binding site" evidence="3">
    <location>
        <position position="438"/>
    </location>
    <ligand>
        <name>L-phenylalanine</name>
        <dbReference type="ChEBI" id="CHEBI:58095"/>
    </ligand>
</feature>
<feature type="mutagenesis site" description="Decreased aminoacylation, increased misacylation of non-cognate Tyr, increased amino acid misincorporation, ommatidia defects, neurodegeneration, impaired locomotive performance, reduced lifespan, smaller organ size due to reduced cell proliferation and increased ER stress. Similar but stronger phenotypes except that smaller organ size is due primarily to apoptosis; when associated with 'W-158' in beta subunit." evidence="4">
    <original>A</original>
    <variation>G</variation>
    <location>
        <position position="456"/>
    </location>
</feature>
<keyword id="KW-0030">Aminoacyl-tRNA synthetase</keyword>
<keyword id="KW-0067">ATP-binding</keyword>
<keyword id="KW-0963">Cytoplasm</keyword>
<keyword id="KW-0436">Ligase</keyword>
<keyword id="KW-0460">Magnesium</keyword>
<keyword id="KW-0479">Metal-binding</keyword>
<keyword id="KW-0547">Nucleotide-binding</keyword>
<keyword id="KW-0648">Protein biosynthesis</keyword>
<keyword id="KW-1185">Reference proteome</keyword>
<comment type="catalytic activity">
    <reaction evidence="4">
        <text>tRNA(Phe) + L-phenylalanine + ATP = L-phenylalanyl-tRNA(Phe) + AMP + diphosphate + H(+)</text>
        <dbReference type="Rhea" id="RHEA:19413"/>
        <dbReference type="Rhea" id="RHEA-COMP:9668"/>
        <dbReference type="Rhea" id="RHEA-COMP:9699"/>
        <dbReference type="ChEBI" id="CHEBI:15378"/>
        <dbReference type="ChEBI" id="CHEBI:30616"/>
        <dbReference type="ChEBI" id="CHEBI:33019"/>
        <dbReference type="ChEBI" id="CHEBI:58095"/>
        <dbReference type="ChEBI" id="CHEBI:78442"/>
        <dbReference type="ChEBI" id="CHEBI:78531"/>
        <dbReference type="ChEBI" id="CHEBI:456215"/>
        <dbReference type="EC" id="6.1.1.20"/>
    </reaction>
</comment>
<comment type="cofactor">
    <cofactor evidence="2">
        <name>Mg(2+)</name>
        <dbReference type="ChEBI" id="CHEBI:18420"/>
    </cofactor>
</comment>
<comment type="subunit">
    <text evidence="1">Tetramer of two alpha and two beta subunits.</text>
</comment>
<comment type="subcellular location">
    <subcellularLocation>
        <location evidence="1">Cytoplasm</location>
    </subcellularLocation>
</comment>
<comment type="disruption phenotype">
    <text evidence="4">Lethal when homozygous.</text>
</comment>
<comment type="similarity">
    <text evidence="5">Belongs to the class-II aminoacyl-tRNA synthetase family. Phe-tRNA synthetase alpha subunit type 2 subfamily.</text>
</comment>
<organism>
    <name type="scientific">Drosophila melanogaster</name>
    <name type="common">Fruit fly</name>
    <dbReference type="NCBI Taxonomy" id="7227"/>
    <lineage>
        <taxon>Eukaryota</taxon>
        <taxon>Metazoa</taxon>
        <taxon>Ecdysozoa</taxon>
        <taxon>Arthropoda</taxon>
        <taxon>Hexapoda</taxon>
        <taxon>Insecta</taxon>
        <taxon>Pterygota</taxon>
        <taxon>Neoptera</taxon>
        <taxon>Endopterygota</taxon>
        <taxon>Diptera</taxon>
        <taxon>Brachycera</taxon>
        <taxon>Muscomorpha</taxon>
        <taxon>Ephydroidea</taxon>
        <taxon>Drosophilidae</taxon>
        <taxon>Drosophila</taxon>
        <taxon>Sophophora</taxon>
    </lineage>
</organism>
<reference key="1">
    <citation type="journal article" date="2000" name="Science">
        <title>The genome sequence of Drosophila melanogaster.</title>
        <authorList>
            <person name="Adams M.D."/>
            <person name="Celniker S.E."/>
            <person name="Holt R.A."/>
            <person name="Evans C.A."/>
            <person name="Gocayne J.D."/>
            <person name="Amanatides P.G."/>
            <person name="Scherer S.E."/>
            <person name="Li P.W."/>
            <person name="Hoskins R.A."/>
            <person name="Galle R.F."/>
            <person name="George R.A."/>
            <person name="Lewis S.E."/>
            <person name="Richards S."/>
            <person name="Ashburner M."/>
            <person name="Henderson S.N."/>
            <person name="Sutton G.G."/>
            <person name="Wortman J.R."/>
            <person name="Yandell M.D."/>
            <person name="Zhang Q."/>
            <person name="Chen L.X."/>
            <person name="Brandon R.C."/>
            <person name="Rogers Y.-H.C."/>
            <person name="Blazej R.G."/>
            <person name="Champe M."/>
            <person name="Pfeiffer B.D."/>
            <person name="Wan K.H."/>
            <person name="Doyle C."/>
            <person name="Baxter E.G."/>
            <person name="Helt G."/>
            <person name="Nelson C.R."/>
            <person name="Miklos G.L.G."/>
            <person name="Abril J.F."/>
            <person name="Agbayani A."/>
            <person name="An H.-J."/>
            <person name="Andrews-Pfannkoch C."/>
            <person name="Baldwin D."/>
            <person name="Ballew R.M."/>
            <person name="Basu A."/>
            <person name="Baxendale J."/>
            <person name="Bayraktaroglu L."/>
            <person name="Beasley E.M."/>
            <person name="Beeson K.Y."/>
            <person name="Benos P.V."/>
            <person name="Berman B.P."/>
            <person name="Bhandari D."/>
            <person name="Bolshakov S."/>
            <person name="Borkova D."/>
            <person name="Botchan M.R."/>
            <person name="Bouck J."/>
            <person name="Brokstein P."/>
            <person name="Brottier P."/>
            <person name="Burtis K.C."/>
            <person name="Busam D.A."/>
            <person name="Butler H."/>
            <person name="Cadieu E."/>
            <person name="Center A."/>
            <person name="Chandra I."/>
            <person name="Cherry J.M."/>
            <person name="Cawley S."/>
            <person name="Dahlke C."/>
            <person name="Davenport L.B."/>
            <person name="Davies P."/>
            <person name="de Pablos B."/>
            <person name="Delcher A."/>
            <person name="Deng Z."/>
            <person name="Mays A.D."/>
            <person name="Dew I."/>
            <person name="Dietz S.M."/>
            <person name="Dodson K."/>
            <person name="Doup L.E."/>
            <person name="Downes M."/>
            <person name="Dugan-Rocha S."/>
            <person name="Dunkov B.C."/>
            <person name="Dunn P."/>
            <person name="Durbin K.J."/>
            <person name="Evangelista C.C."/>
            <person name="Ferraz C."/>
            <person name="Ferriera S."/>
            <person name="Fleischmann W."/>
            <person name="Fosler C."/>
            <person name="Gabrielian A.E."/>
            <person name="Garg N.S."/>
            <person name="Gelbart W.M."/>
            <person name="Glasser K."/>
            <person name="Glodek A."/>
            <person name="Gong F."/>
            <person name="Gorrell J.H."/>
            <person name="Gu Z."/>
            <person name="Guan P."/>
            <person name="Harris M."/>
            <person name="Harris N.L."/>
            <person name="Harvey D.A."/>
            <person name="Heiman T.J."/>
            <person name="Hernandez J.R."/>
            <person name="Houck J."/>
            <person name="Hostin D."/>
            <person name="Houston K.A."/>
            <person name="Howland T.J."/>
            <person name="Wei M.-H."/>
            <person name="Ibegwam C."/>
            <person name="Jalali M."/>
            <person name="Kalush F."/>
            <person name="Karpen G.H."/>
            <person name="Ke Z."/>
            <person name="Kennison J.A."/>
            <person name="Ketchum K.A."/>
            <person name="Kimmel B.E."/>
            <person name="Kodira C.D."/>
            <person name="Kraft C.L."/>
            <person name="Kravitz S."/>
            <person name="Kulp D."/>
            <person name="Lai Z."/>
            <person name="Lasko P."/>
            <person name="Lei Y."/>
            <person name="Levitsky A.A."/>
            <person name="Li J.H."/>
            <person name="Li Z."/>
            <person name="Liang Y."/>
            <person name="Lin X."/>
            <person name="Liu X."/>
            <person name="Mattei B."/>
            <person name="McIntosh T.C."/>
            <person name="McLeod M.P."/>
            <person name="McPherson D."/>
            <person name="Merkulov G."/>
            <person name="Milshina N.V."/>
            <person name="Mobarry C."/>
            <person name="Morris J."/>
            <person name="Moshrefi A."/>
            <person name="Mount S.M."/>
            <person name="Moy M."/>
            <person name="Murphy B."/>
            <person name="Murphy L."/>
            <person name="Muzny D.M."/>
            <person name="Nelson D.L."/>
            <person name="Nelson D.R."/>
            <person name="Nelson K.A."/>
            <person name="Nixon K."/>
            <person name="Nusskern D.R."/>
            <person name="Pacleb J.M."/>
            <person name="Palazzolo M."/>
            <person name="Pittman G.S."/>
            <person name="Pan S."/>
            <person name="Pollard J."/>
            <person name="Puri V."/>
            <person name="Reese M.G."/>
            <person name="Reinert K."/>
            <person name="Remington K."/>
            <person name="Saunders R.D.C."/>
            <person name="Scheeler F."/>
            <person name="Shen H."/>
            <person name="Shue B.C."/>
            <person name="Siden-Kiamos I."/>
            <person name="Simpson M."/>
            <person name="Skupski M.P."/>
            <person name="Smith T.J."/>
            <person name="Spier E."/>
            <person name="Spradling A.C."/>
            <person name="Stapleton M."/>
            <person name="Strong R."/>
            <person name="Sun E."/>
            <person name="Svirskas R."/>
            <person name="Tector C."/>
            <person name="Turner R."/>
            <person name="Venter E."/>
            <person name="Wang A.H."/>
            <person name="Wang X."/>
            <person name="Wang Z.-Y."/>
            <person name="Wassarman D.A."/>
            <person name="Weinstock G.M."/>
            <person name="Weissenbach J."/>
            <person name="Williams S.M."/>
            <person name="Woodage T."/>
            <person name="Worley K.C."/>
            <person name="Wu D."/>
            <person name="Yang S."/>
            <person name="Yao Q.A."/>
            <person name="Ye J."/>
            <person name="Yeh R.-F."/>
            <person name="Zaveri J.S."/>
            <person name="Zhan M."/>
            <person name="Zhang G."/>
            <person name="Zhao Q."/>
            <person name="Zheng L."/>
            <person name="Zheng X.H."/>
            <person name="Zhong F.N."/>
            <person name="Zhong W."/>
            <person name="Zhou X."/>
            <person name="Zhu S.C."/>
            <person name="Zhu X."/>
            <person name="Smith H.O."/>
            <person name="Gibbs R.A."/>
            <person name="Myers E.W."/>
            <person name="Rubin G.M."/>
            <person name="Venter J.C."/>
        </authorList>
    </citation>
    <scope>NUCLEOTIDE SEQUENCE [LARGE SCALE GENOMIC DNA]</scope>
    <source>
        <strain>Berkeley</strain>
    </source>
</reference>
<reference key="2">
    <citation type="journal article" date="2002" name="Genome Biol.">
        <title>Annotation of the Drosophila melanogaster euchromatic genome: a systematic review.</title>
        <authorList>
            <person name="Misra S."/>
            <person name="Crosby M.A."/>
            <person name="Mungall C.J."/>
            <person name="Matthews B.B."/>
            <person name="Campbell K.S."/>
            <person name="Hradecky P."/>
            <person name="Huang Y."/>
            <person name="Kaminker J.S."/>
            <person name="Millburn G.H."/>
            <person name="Prochnik S.E."/>
            <person name="Smith C.D."/>
            <person name="Tupy J.L."/>
            <person name="Whitfield E.J."/>
            <person name="Bayraktaroglu L."/>
            <person name="Berman B.P."/>
            <person name="Bettencourt B.R."/>
            <person name="Celniker S.E."/>
            <person name="de Grey A.D.N.J."/>
            <person name="Drysdale R.A."/>
            <person name="Harris N.L."/>
            <person name="Richter J."/>
            <person name="Russo S."/>
            <person name="Schroeder A.J."/>
            <person name="Shu S.Q."/>
            <person name="Stapleton M."/>
            <person name="Yamada C."/>
            <person name="Ashburner M."/>
            <person name="Gelbart W.M."/>
            <person name="Rubin G.M."/>
            <person name="Lewis S.E."/>
        </authorList>
    </citation>
    <scope>GENOME REANNOTATION</scope>
    <source>
        <strain>Berkeley</strain>
    </source>
</reference>
<reference key="3">
    <citation type="journal article" date="2002" name="Genome Biol.">
        <title>A Drosophila full-length cDNA resource.</title>
        <authorList>
            <person name="Stapleton M."/>
            <person name="Carlson J.W."/>
            <person name="Brokstein P."/>
            <person name="Yu C."/>
            <person name="Champe M."/>
            <person name="George R.A."/>
            <person name="Guarin H."/>
            <person name="Kronmiller B."/>
            <person name="Pacleb J.M."/>
            <person name="Park S."/>
            <person name="Wan K.H."/>
            <person name="Rubin G.M."/>
            <person name="Celniker S.E."/>
        </authorList>
    </citation>
    <scope>NUCLEOTIDE SEQUENCE [LARGE SCALE MRNA]</scope>
    <source>
        <strain>Berkeley</strain>
        <tissue>Embryo</tissue>
    </source>
</reference>
<reference key="4">
    <citation type="journal article" date="2014" name="Nat. Commun.">
        <title>Double-sieving-defective aminoacyl-tRNA synthetase causes protein mistranslation and affects cellular physiology and development.</title>
        <authorList>
            <person name="Lu J."/>
            <person name="Bergert M."/>
            <person name="Walther A."/>
            <person name="Suter B."/>
        </authorList>
    </citation>
    <scope>CATALYTIC ACTIVITY</scope>
    <scope>DISRUPTION PHENOTYPE</scope>
    <scope>MUTAGENESIS OF ALA-456</scope>
</reference>
<protein>
    <recommendedName>
        <fullName>Phenylalanine--tRNA ligase alpha subunit</fullName>
        <ecNumber evidence="4">6.1.1.20</ecNumber>
    </recommendedName>
    <alternativeName>
        <fullName>Phenylalanyl-tRNA synthetase alpha subunit</fullName>
        <shortName>PheRS</shortName>
    </alternativeName>
</protein>
<evidence type="ECO:0000250" key="1"/>
<evidence type="ECO:0000250" key="2">
    <source>
        <dbReference type="UniProtKB" id="A5K9S0"/>
    </source>
</evidence>
<evidence type="ECO:0000250" key="3">
    <source>
        <dbReference type="UniProtKB" id="Q9Y285"/>
    </source>
</evidence>
<evidence type="ECO:0000269" key="4">
    <source>
    </source>
</evidence>
<evidence type="ECO:0000305" key="5"/>
<evidence type="ECO:0000312" key="6">
    <source>
        <dbReference type="FlyBase" id="FBgn0030007"/>
    </source>
</evidence>